<keyword id="KW-0963">Cytoplasm</keyword>
<feature type="chain" id="PRO_1000132728" description="Nucleoid-associated protein YejK">
    <location>
        <begin position="1"/>
        <end position="335"/>
    </location>
</feature>
<gene>
    <name evidence="1" type="primary">yejK</name>
    <name type="ordered locus">SeD_A2577</name>
</gene>
<organism>
    <name type="scientific">Salmonella dublin (strain CT_02021853)</name>
    <dbReference type="NCBI Taxonomy" id="439851"/>
    <lineage>
        <taxon>Bacteria</taxon>
        <taxon>Pseudomonadati</taxon>
        <taxon>Pseudomonadota</taxon>
        <taxon>Gammaproteobacteria</taxon>
        <taxon>Enterobacterales</taxon>
        <taxon>Enterobacteriaceae</taxon>
        <taxon>Salmonella</taxon>
    </lineage>
</organism>
<reference key="1">
    <citation type="journal article" date="2011" name="J. Bacteriol.">
        <title>Comparative genomics of 28 Salmonella enterica isolates: evidence for CRISPR-mediated adaptive sublineage evolution.</title>
        <authorList>
            <person name="Fricke W.F."/>
            <person name="Mammel M.K."/>
            <person name="McDermott P.F."/>
            <person name="Tartera C."/>
            <person name="White D.G."/>
            <person name="Leclerc J.E."/>
            <person name="Ravel J."/>
            <person name="Cebula T.A."/>
        </authorList>
    </citation>
    <scope>NUCLEOTIDE SEQUENCE [LARGE SCALE GENOMIC DNA]</scope>
    <source>
        <strain>CT_02021853</strain>
    </source>
</reference>
<accession>B5FNN2</accession>
<name>NDPA_SALDC</name>
<protein>
    <recommendedName>
        <fullName evidence="1">Nucleoid-associated protein YejK</fullName>
    </recommendedName>
</protein>
<dbReference type="EMBL" id="CP001144">
    <property type="protein sequence ID" value="ACH76516.1"/>
    <property type="molecule type" value="Genomic_DNA"/>
</dbReference>
<dbReference type="RefSeq" id="WP_000050806.1">
    <property type="nucleotide sequence ID" value="NC_011205.1"/>
</dbReference>
<dbReference type="SMR" id="B5FNN2"/>
<dbReference type="KEGG" id="sed:SeD_A2577"/>
<dbReference type="HOGENOM" id="CLU_063050_0_1_6"/>
<dbReference type="Proteomes" id="UP000008322">
    <property type="component" value="Chromosome"/>
</dbReference>
<dbReference type="GO" id="GO:0043590">
    <property type="term" value="C:bacterial nucleoid"/>
    <property type="evidence" value="ECO:0007669"/>
    <property type="project" value="TreeGrafter"/>
</dbReference>
<dbReference type="GO" id="GO:0005737">
    <property type="term" value="C:cytoplasm"/>
    <property type="evidence" value="ECO:0007669"/>
    <property type="project" value="UniProtKB-UniRule"/>
</dbReference>
<dbReference type="GO" id="GO:0003690">
    <property type="term" value="F:double-stranded DNA binding"/>
    <property type="evidence" value="ECO:0007669"/>
    <property type="project" value="TreeGrafter"/>
</dbReference>
<dbReference type="GO" id="GO:0003727">
    <property type="term" value="F:single-stranded RNA binding"/>
    <property type="evidence" value="ECO:0007669"/>
    <property type="project" value="TreeGrafter"/>
</dbReference>
<dbReference type="HAMAP" id="MF_00730">
    <property type="entry name" value="NdpA"/>
    <property type="match status" value="1"/>
</dbReference>
<dbReference type="InterPro" id="IPR007358">
    <property type="entry name" value="Nucleoid_associated_NdpA"/>
</dbReference>
<dbReference type="NCBIfam" id="NF001557">
    <property type="entry name" value="PRK00378.1"/>
    <property type="match status" value="1"/>
</dbReference>
<dbReference type="PANTHER" id="PTHR38772">
    <property type="match status" value="1"/>
</dbReference>
<dbReference type="PANTHER" id="PTHR38772:SF1">
    <property type="entry name" value="NUCLEOID-ASSOCIATED PROTEIN YEJK"/>
    <property type="match status" value="1"/>
</dbReference>
<dbReference type="Pfam" id="PF04245">
    <property type="entry name" value="NA37"/>
    <property type="match status" value="1"/>
</dbReference>
<proteinExistence type="inferred from homology"/>
<sequence length="335" mass="37877">MSLDINQIALHQLIKRDEQNLELVLRDSLLEPTTTVVEMVAELHRVYSAKNKAYGLFNEESELAQALRLQRQGEEDFLAFSRAATGRLRDELAKYPFADGGIVLFCHYRYLAVEYLLVTVLNNLSSMRVNENLDINPTHYLDINHADIVARIDLTEWETNPQSTRYLTFLKGRVGRKVADFFMDFLGASEGLNAKAQNRGLLQAVDDFTAEAQLDKAERQNVRQQVYSYCNEQLQAGEEIELESLSKELSGVSEVSFSEFTAEKGYELEESFPADRSTLRQLTKYAGSGGGLTINFDAMLLGERIFWDPATDTLTIKGTPPNLRDQLQRRTSGGK</sequence>
<evidence type="ECO:0000255" key="1">
    <source>
        <dbReference type="HAMAP-Rule" id="MF_00730"/>
    </source>
</evidence>
<comment type="subcellular location">
    <subcellularLocation>
        <location evidence="1">Cytoplasm</location>
        <location evidence="1">Nucleoid</location>
    </subcellularLocation>
</comment>
<comment type="similarity">
    <text evidence="1">Belongs to the YejK family.</text>
</comment>